<sequence>MKKERTKVFGRGANECRRCGRRRGLIRMYGLYLCRQCFREVASELGFKKYW</sequence>
<name>RS14Z_ARCFU</name>
<evidence type="ECO:0000255" key="1">
    <source>
        <dbReference type="HAMAP-Rule" id="MF_01364"/>
    </source>
</evidence>
<evidence type="ECO:0000305" key="2"/>
<gene>
    <name evidence="1" type="primary">rps14</name>
    <name type="ordered locus">AF_1911</name>
</gene>
<reference key="1">
    <citation type="journal article" date="1997" name="Nature">
        <title>The complete genome sequence of the hyperthermophilic, sulphate-reducing archaeon Archaeoglobus fulgidus.</title>
        <authorList>
            <person name="Klenk H.-P."/>
            <person name="Clayton R.A."/>
            <person name="Tomb J.-F."/>
            <person name="White O."/>
            <person name="Nelson K.E."/>
            <person name="Ketchum K.A."/>
            <person name="Dodson R.J."/>
            <person name="Gwinn M.L."/>
            <person name="Hickey E.K."/>
            <person name="Peterson J.D."/>
            <person name="Richardson D.L."/>
            <person name="Kerlavage A.R."/>
            <person name="Graham D.E."/>
            <person name="Kyrpides N.C."/>
            <person name="Fleischmann R.D."/>
            <person name="Quackenbush J."/>
            <person name="Lee N.H."/>
            <person name="Sutton G.G."/>
            <person name="Gill S.R."/>
            <person name="Kirkness E.F."/>
            <person name="Dougherty B.A."/>
            <person name="McKenney K."/>
            <person name="Adams M.D."/>
            <person name="Loftus B.J."/>
            <person name="Peterson S.N."/>
            <person name="Reich C.I."/>
            <person name="McNeil L.K."/>
            <person name="Badger J.H."/>
            <person name="Glodek A."/>
            <person name="Zhou L."/>
            <person name="Overbeek R."/>
            <person name="Gocayne J.D."/>
            <person name="Weidman J.F."/>
            <person name="McDonald L.A."/>
            <person name="Utterback T.R."/>
            <person name="Cotton M.D."/>
            <person name="Spriggs T."/>
            <person name="Artiach P."/>
            <person name="Kaine B.P."/>
            <person name="Sykes S.M."/>
            <person name="Sadow P.W."/>
            <person name="D'Andrea K.P."/>
            <person name="Bowman C."/>
            <person name="Fujii C."/>
            <person name="Garland S.A."/>
            <person name="Mason T.M."/>
            <person name="Olsen G.J."/>
            <person name="Fraser C.M."/>
            <person name="Smith H.O."/>
            <person name="Woese C.R."/>
            <person name="Venter J.C."/>
        </authorList>
    </citation>
    <scope>NUCLEOTIDE SEQUENCE [LARGE SCALE GENOMIC DNA]</scope>
    <source>
        <strain>ATCC 49558 / DSM 4304 / JCM 9628 / NBRC 100126 / VC-16</strain>
    </source>
</reference>
<feature type="chain" id="PRO_0000130989" description="Small ribosomal subunit protein uS14">
    <location>
        <begin position="1"/>
        <end position="51"/>
    </location>
</feature>
<feature type="binding site" evidence="1">
    <location>
        <position position="16"/>
    </location>
    <ligand>
        <name>Zn(2+)</name>
        <dbReference type="ChEBI" id="CHEBI:29105"/>
    </ligand>
</feature>
<feature type="binding site" evidence="1">
    <location>
        <position position="19"/>
    </location>
    <ligand>
        <name>Zn(2+)</name>
        <dbReference type="ChEBI" id="CHEBI:29105"/>
    </ligand>
</feature>
<feature type="binding site" evidence="1">
    <location>
        <position position="34"/>
    </location>
    <ligand>
        <name>Zn(2+)</name>
        <dbReference type="ChEBI" id="CHEBI:29105"/>
    </ligand>
</feature>
<feature type="binding site" evidence="1">
    <location>
        <position position="37"/>
    </location>
    <ligand>
        <name>Zn(2+)</name>
        <dbReference type="ChEBI" id="CHEBI:29105"/>
    </ligand>
</feature>
<protein>
    <recommendedName>
        <fullName evidence="1">Small ribosomal subunit protein uS14</fullName>
    </recommendedName>
    <alternativeName>
        <fullName evidence="2">30S ribosomal protein S14 type Z</fullName>
    </alternativeName>
</protein>
<organism>
    <name type="scientific">Archaeoglobus fulgidus (strain ATCC 49558 / DSM 4304 / JCM 9628 / NBRC 100126 / VC-16)</name>
    <dbReference type="NCBI Taxonomy" id="224325"/>
    <lineage>
        <taxon>Archaea</taxon>
        <taxon>Methanobacteriati</taxon>
        <taxon>Methanobacteriota</taxon>
        <taxon>Archaeoglobi</taxon>
        <taxon>Archaeoglobales</taxon>
        <taxon>Archaeoglobaceae</taxon>
        <taxon>Archaeoglobus</taxon>
    </lineage>
</organism>
<comment type="function">
    <text evidence="1">Binds 16S rRNA, required for the assembly of 30S particles.</text>
</comment>
<comment type="cofactor">
    <cofactor evidence="1">
        <name>Zn(2+)</name>
        <dbReference type="ChEBI" id="CHEBI:29105"/>
    </cofactor>
    <text evidence="1">Binds 1 zinc ion per subunit.</text>
</comment>
<comment type="subunit">
    <text evidence="1">Part of the 30S ribosomal subunit.</text>
</comment>
<comment type="similarity">
    <text evidence="1">Belongs to the universal ribosomal protein uS14 family. Zinc-binding uS14 subfamily.</text>
</comment>
<dbReference type="EMBL" id="AE000782">
    <property type="protein sequence ID" value="AAB89354.1"/>
    <property type="molecule type" value="Genomic_DNA"/>
</dbReference>
<dbReference type="PIR" id="F69488">
    <property type="entry name" value="F69488"/>
</dbReference>
<dbReference type="RefSeq" id="WP_010879404.1">
    <property type="nucleotide sequence ID" value="NC_000917.1"/>
</dbReference>
<dbReference type="SMR" id="O28368"/>
<dbReference type="STRING" id="224325.AF_1911"/>
<dbReference type="PaxDb" id="224325-AF_1911"/>
<dbReference type="EnsemblBacteria" id="AAB89354">
    <property type="protein sequence ID" value="AAB89354"/>
    <property type="gene ID" value="AF_1911"/>
</dbReference>
<dbReference type="KEGG" id="afu:AF_1911"/>
<dbReference type="eggNOG" id="arCOG00782">
    <property type="taxonomic scope" value="Archaea"/>
</dbReference>
<dbReference type="HOGENOM" id="CLU_177289_2_2_2"/>
<dbReference type="Proteomes" id="UP000002199">
    <property type="component" value="Chromosome"/>
</dbReference>
<dbReference type="GO" id="GO:0022627">
    <property type="term" value="C:cytosolic small ribosomal subunit"/>
    <property type="evidence" value="ECO:0007669"/>
    <property type="project" value="TreeGrafter"/>
</dbReference>
<dbReference type="GO" id="GO:0019843">
    <property type="term" value="F:rRNA binding"/>
    <property type="evidence" value="ECO:0007669"/>
    <property type="project" value="UniProtKB-UniRule"/>
</dbReference>
<dbReference type="GO" id="GO:0003735">
    <property type="term" value="F:structural constituent of ribosome"/>
    <property type="evidence" value="ECO:0007669"/>
    <property type="project" value="InterPro"/>
</dbReference>
<dbReference type="GO" id="GO:0008270">
    <property type="term" value="F:zinc ion binding"/>
    <property type="evidence" value="ECO:0007669"/>
    <property type="project" value="UniProtKB-UniRule"/>
</dbReference>
<dbReference type="GO" id="GO:0002181">
    <property type="term" value="P:cytoplasmic translation"/>
    <property type="evidence" value="ECO:0007669"/>
    <property type="project" value="TreeGrafter"/>
</dbReference>
<dbReference type="FunFam" id="4.10.830.10:FF:000002">
    <property type="entry name" value="40S ribosomal protein S29"/>
    <property type="match status" value="1"/>
</dbReference>
<dbReference type="Gene3D" id="4.10.830.10">
    <property type="entry name" value="30s Ribosomal Protein S14, Chain N"/>
    <property type="match status" value="1"/>
</dbReference>
<dbReference type="HAMAP" id="MF_01364_A">
    <property type="entry name" value="Ribosomal_uS14_2_A"/>
    <property type="match status" value="1"/>
</dbReference>
<dbReference type="InterPro" id="IPR001209">
    <property type="entry name" value="Ribosomal_uS14"/>
</dbReference>
<dbReference type="InterPro" id="IPR023676">
    <property type="entry name" value="Ribosomal_uS14_arc"/>
</dbReference>
<dbReference type="InterPro" id="IPR018271">
    <property type="entry name" value="Ribosomal_uS14_CS"/>
</dbReference>
<dbReference type="InterPro" id="IPR039744">
    <property type="entry name" value="RIbosomal_uS14_euk_arc"/>
</dbReference>
<dbReference type="InterPro" id="IPR043140">
    <property type="entry name" value="Ribosomal_uS14_sf"/>
</dbReference>
<dbReference type="NCBIfam" id="NF004424">
    <property type="entry name" value="PRK05766.1"/>
    <property type="match status" value="1"/>
</dbReference>
<dbReference type="PANTHER" id="PTHR12010">
    <property type="entry name" value="40S RIBOSOMAL PROTEIN S29"/>
    <property type="match status" value="1"/>
</dbReference>
<dbReference type="PANTHER" id="PTHR12010:SF2">
    <property type="entry name" value="40S RIBOSOMAL PROTEIN S29"/>
    <property type="match status" value="1"/>
</dbReference>
<dbReference type="Pfam" id="PF00253">
    <property type="entry name" value="Ribosomal_S14"/>
    <property type="match status" value="1"/>
</dbReference>
<dbReference type="SUPFAM" id="SSF57716">
    <property type="entry name" value="Glucocorticoid receptor-like (DNA-binding domain)"/>
    <property type="match status" value="1"/>
</dbReference>
<dbReference type="PROSITE" id="PS00527">
    <property type="entry name" value="RIBOSOMAL_S14"/>
    <property type="match status" value="1"/>
</dbReference>
<proteinExistence type="inferred from homology"/>
<keyword id="KW-0479">Metal-binding</keyword>
<keyword id="KW-1185">Reference proteome</keyword>
<keyword id="KW-0687">Ribonucleoprotein</keyword>
<keyword id="KW-0689">Ribosomal protein</keyword>
<keyword id="KW-0694">RNA-binding</keyword>
<keyword id="KW-0699">rRNA-binding</keyword>
<keyword id="KW-0862">Zinc</keyword>
<accession>O28368</accession>